<keyword id="KW-0030">Aminoacyl-tRNA synthetase</keyword>
<keyword id="KW-0067">ATP-binding</keyword>
<keyword id="KW-0963">Cytoplasm</keyword>
<keyword id="KW-0436">Ligase</keyword>
<keyword id="KW-0479">Metal-binding</keyword>
<keyword id="KW-0547">Nucleotide-binding</keyword>
<keyword id="KW-0648">Protein biosynthesis</keyword>
<keyword id="KW-0862">Zinc</keyword>
<evidence type="ECO:0000255" key="1">
    <source>
        <dbReference type="HAMAP-Rule" id="MF_00041"/>
    </source>
</evidence>
<reference key="1">
    <citation type="journal article" date="2008" name="J. Bacteriol.">
        <title>Comparative genome sequence analysis of multidrug-resistant Acinetobacter baumannii.</title>
        <authorList>
            <person name="Adams M.D."/>
            <person name="Goglin K."/>
            <person name="Molyneaux N."/>
            <person name="Hujer K.M."/>
            <person name="Lavender H."/>
            <person name="Jamison J.J."/>
            <person name="MacDonald I.J."/>
            <person name="Martin K.M."/>
            <person name="Russo T."/>
            <person name="Campagnari A.A."/>
            <person name="Hujer A.M."/>
            <person name="Bonomo R.A."/>
            <person name="Gill S.R."/>
        </authorList>
    </citation>
    <scope>NUCLEOTIDE SEQUENCE [LARGE SCALE GENOMIC DNA]</scope>
    <source>
        <strain>AB0057</strain>
    </source>
</reference>
<comment type="catalytic activity">
    <reaction evidence="1">
        <text>tRNA(Cys) + L-cysteine + ATP = L-cysteinyl-tRNA(Cys) + AMP + diphosphate</text>
        <dbReference type="Rhea" id="RHEA:17773"/>
        <dbReference type="Rhea" id="RHEA-COMP:9661"/>
        <dbReference type="Rhea" id="RHEA-COMP:9679"/>
        <dbReference type="ChEBI" id="CHEBI:30616"/>
        <dbReference type="ChEBI" id="CHEBI:33019"/>
        <dbReference type="ChEBI" id="CHEBI:35235"/>
        <dbReference type="ChEBI" id="CHEBI:78442"/>
        <dbReference type="ChEBI" id="CHEBI:78517"/>
        <dbReference type="ChEBI" id="CHEBI:456215"/>
        <dbReference type="EC" id="6.1.1.16"/>
    </reaction>
</comment>
<comment type="cofactor">
    <cofactor evidence="1">
        <name>Zn(2+)</name>
        <dbReference type="ChEBI" id="CHEBI:29105"/>
    </cofactor>
    <text evidence="1">Binds 1 zinc ion per subunit.</text>
</comment>
<comment type="subunit">
    <text evidence="1">Monomer.</text>
</comment>
<comment type="subcellular location">
    <subcellularLocation>
        <location evidence="1">Cytoplasm</location>
    </subcellularLocation>
</comment>
<comment type="similarity">
    <text evidence="1">Belongs to the class-I aminoacyl-tRNA synthetase family.</text>
</comment>
<name>SYC_ACIB5</name>
<dbReference type="EC" id="6.1.1.16" evidence="1"/>
<dbReference type="EMBL" id="CP001182">
    <property type="protein sequence ID" value="ACJ40426.1"/>
    <property type="molecule type" value="Genomic_DNA"/>
</dbReference>
<dbReference type="RefSeq" id="WP_001182272.1">
    <property type="nucleotide sequence ID" value="NC_011586.2"/>
</dbReference>
<dbReference type="SMR" id="B7IBU3"/>
<dbReference type="KEGG" id="abn:AB57_1408"/>
<dbReference type="HOGENOM" id="CLU_013528_0_1_6"/>
<dbReference type="Proteomes" id="UP000007094">
    <property type="component" value="Chromosome"/>
</dbReference>
<dbReference type="GO" id="GO:0005829">
    <property type="term" value="C:cytosol"/>
    <property type="evidence" value="ECO:0007669"/>
    <property type="project" value="TreeGrafter"/>
</dbReference>
<dbReference type="GO" id="GO:0005524">
    <property type="term" value="F:ATP binding"/>
    <property type="evidence" value="ECO:0007669"/>
    <property type="project" value="UniProtKB-UniRule"/>
</dbReference>
<dbReference type="GO" id="GO:0004817">
    <property type="term" value="F:cysteine-tRNA ligase activity"/>
    <property type="evidence" value="ECO:0007669"/>
    <property type="project" value="UniProtKB-UniRule"/>
</dbReference>
<dbReference type="GO" id="GO:0008270">
    <property type="term" value="F:zinc ion binding"/>
    <property type="evidence" value="ECO:0007669"/>
    <property type="project" value="UniProtKB-UniRule"/>
</dbReference>
<dbReference type="GO" id="GO:0006423">
    <property type="term" value="P:cysteinyl-tRNA aminoacylation"/>
    <property type="evidence" value="ECO:0007669"/>
    <property type="project" value="UniProtKB-UniRule"/>
</dbReference>
<dbReference type="CDD" id="cd07963">
    <property type="entry name" value="Anticodon_Ia_Cys"/>
    <property type="match status" value="1"/>
</dbReference>
<dbReference type="CDD" id="cd00672">
    <property type="entry name" value="CysRS_core"/>
    <property type="match status" value="1"/>
</dbReference>
<dbReference type="FunFam" id="3.40.50.620:FF:000009">
    <property type="entry name" value="Cysteine--tRNA ligase"/>
    <property type="match status" value="1"/>
</dbReference>
<dbReference type="Gene3D" id="1.20.120.1910">
    <property type="entry name" value="Cysteine-tRNA ligase, C-terminal anti-codon recognition domain"/>
    <property type="match status" value="1"/>
</dbReference>
<dbReference type="Gene3D" id="3.40.50.620">
    <property type="entry name" value="HUPs"/>
    <property type="match status" value="1"/>
</dbReference>
<dbReference type="HAMAP" id="MF_00041">
    <property type="entry name" value="Cys_tRNA_synth"/>
    <property type="match status" value="1"/>
</dbReference>
<dbReference type="InterPro" id="IPR015803">
    <property type="entry name" value="Cys-tRNA-ligase"/>
</dbReference>
<dbReference type="InterPro" id="IPR015273">
    <property type="entry name" value="Cys-tRNA-synt_Ia_DALR"/>
</dbReference>
<dbReference type="InterPro" id="IPR024909">
    <property type="entry name" value="Cys-tRNA/MSH_ligase"/>
</dbReference>
<dbReference type="InterPro" id="IPR014729">
    <property type="entry name" value="Rossmann-like_a/b/a_fold"/>
</dbReference>
<dbReference type="InterPro" id="IPR032678">
    <property type="entry name" value="tRNA-synt_1_cat_dom"/>
</dbReference>
<dbReference type="InterPro" id="IPR009080">
    <property type="entry name" value="tRNAsynth_Ia_anticodon-bd"/>
</dbReference>
<dbReference type="NCBIfam" id="TIGR00435">
    <property type="entry name" value="cysS"/>
    <property type="match status" value="1"/>
</dbReference>
<dbReference type="PANTHER" id="PTHR10890:SF3">
    <property type="entry name" value="CYSTEINE--TRNA LIGASE, CYTOPLASMIC"/>
    <property type="match status" value="1"/>
</dbReference>
<dbReference type="PANTHER" id="PTHR10890">
    <property type="entry name" value="CYSTEINYL-TRNA SYNTHETASE"/>
    <property type="match status" value="1"/>
</dbReference>
<dbReference type="Pfam" id="PF09190">
    <property type="entry name" value="DALR_2"/>
    <property type="match status" value="1"/>
</dbReference>
<dbReference type="Pfam" id="PF01406">
    <property type="entry name" value="tRNA-synt_1e"/>
    <property type="match status" value="1"/>
</dbReference>
<dbReference type="PRINTS" id="PR00983">
    <property type="entry name" value="TRNASYNTHCYS"/>
</dbReference>
<dbReference type="SMART" id="SM00840">
    <property type="entry name" value="DALR_2"/>
    <property type="match status" value="1"/>
</dbReference>
<dbReference type="SUPFAM" id="SSF47323">
    <property type="entry name" value="Anticodon-binding domain of a subclass of class I aminoacyl-tRNA synthetases"/>
    <property type="match status" value="1"/>
</dbReference>
<dbReference type="SUPFAM" id="SSF52374">
    <property type="entry name" value="Nucleotidylyl transferase"/>
    <property type="match status" value="1"/>
</dbReference>
<protein>
    <recommendedName>
        <fullName evidence="1">Cysteine--tRNA ligase</fullName>
        <ecNumber evidence="1">6.1.1.16</ecNumber>
    </recommendedName>
    <alternativeName>
        <fullName evidence="1">Cysteinyl-tRNA synthetase</fullName>
        <shortName evidence="1">CysRS</shortName>
    </alternativeName>
</protein>
<proteinExistence type="inferred from homology"/>
<organism>
    <name type="scientific">Acinetobacter baumannii (strain AB0057)</name>
    <dbReference type="NCBI Taxonomy" id="480119"/>
    <lineage>
        <taxon>Bacteria</taxon>
        <taxon>Pseudomonadati</taxon>
        <taxon>Pseudomonadota</taxon>
        <taxon>Gammaproteobacteria</taxon>
        <taxon>Moraxellales</taxon>
        <taxon>Moraxellaceae</taxon>
        <taxon>Acinetobacter</taxon>
        <taxon>Acinetobacter calcoaceticus/baumannii complex</taxon>
    </lineage>
</organism>
<feature type="chain" id="PRO_1000199027" description="Cysteine--tRNA ligase">
    <location>
        <begin position="1"/>
        <end position="473"/>
    </location>
</feature>
<feature type="short sequence motif" description="'HIGH' region">
    <location>
        <begin position="32"/>
        <end position="42"/>
    </location>
</feature>
<feature type="short sequence motif" description="'KMSKS' region">
    <location>
        <begin position="270"/>
        <end position="274"/>
    </location>
</feature>
<feature type="binding site" evidence="1">
    <location>
        <position position="30"/>
    </location>
    <ligand>
        <name>Zn(2+)</name>
        <dbReference type="ChEBI" id="CHEBI:29105"/>
    </ligand>
</feature>
<feature type="binding site" evidence="1">
    <location>
        <position position="213"/>
    </location>
    <ligand>
        <name>Zn(2+)</name>
        <dbReference type="ChEBI" id="CHEBI:29105"/>
    </ligand>
</feature>
<feature type="binding site" evidence="1">
    <location>
        <position position="238"/>
    </location>
    <ligand>
        <name>Zn(2+)</name>
        <dbReference type="ChEBI" id="CHEBI:29105"/>
    </ligand>
</feature>
<feature type="binding site" evidence="1">
    <location>
        <position position="242"/>
    </location>
    <ligand>
        <name>Zn(2+)</name>
        <dbReference type="ChEBI" id="CHEBI:29105"/>
    </ligand>
</feature>
<feature type="binding site" evidence="1">
    <location>
        <position position="273"/>
    </location>
    <ligand>
        <name>ATP</name>
        <dbReference type="ChEBI" id="CHEBI:30616"/>
    </ligand>
</feature>
<accession>B7IBU3</accession>
<sequence length="473" mass="54170">MQPFVLYNSEQRKKVEFVPRKEGHIDMYVCGMTVYDYCHIGHARVMVAFDYIIRFLRSQGWKVRYIRNITDIDDKIIKRANENGETIQQLTTRFIDAMNEDAANLGCLAPDEAPKATEYIDQMQNMIGNLVNKGAAYPASNGDVYFEVTKFEKYGRLSGRKLDDMQAGASERIDVEVEKKHPFDFVLWKHAKENEPSWASPWGNGRPGWHIECSAMSTCCLGNHFDIHGGGSDLMFPHHENEIAQSEASTGEQYVNYWMHVGFINVDGEKMSKSLGNFFTIRDVMEKFHPEVIRYFIVSSHYRSPVNFSDVALKEAKTSLTRFYHSFKAYQQVYGQTTTEALDQSFIERFNNAMCDDFNTAEAMAVLFELNKELNRAVKEEQADQATVLYSTLRHLTNILGLVQHNVDDFLKSDIGQDALALSDAEIEDFIQQRVDAKKAKDFAKADSIRQSLLEQGVVLEDTRQGTVWRRAD</sequence>
<gene>
    <name evidence="1" type="primary">cysS</name>
    <name type="ordered locus">AB57_1408</name>
</gene>